<protein>
    <recommendedName>
        <fullName evidence="1">Putative pre-16S rRNA nuclease</fullName>
        <ecNumber evidence="1">3.1.-.-</ecNumber>
    </recommendedName>
</protein>
<dbReference type="EC" id="3.1.-.-" evidence="1"/>
<dbReference type="EMBL" id="CP000088">
    <property type="protein sequence ID" value="AAZ56102.1"/>
    <property type="molecule type" value="Genomic_DNA"/>
</dbReference>
<dbReference type="SMR" id="Q47N67"/>
<dbReference type="STRING" id="269800.Tfu_2069"/>
<dbReference type="KEGG" id="tfu:Tfu_2069"/>
<dbReference type="eggNOG" id="COG0816">
    <property type="taxonomic scope" value="Bacteria"/>
</dbReference>
<dbReference type="HOGENOM" id="CLU_098240_0_0_11"/>
<dbReference type="OrthoDB" id="9790539at2"/>
<dbReference type="GO" id="GO:0005829">
    <property type="term" value="C:cytosol"/>
    <property type="evidence" value="ECO:0007669"/>
    <property type="project" value="TreeGrafter"/>
</dbReference>
<dbReference type="GO" id="GO:0004518">
    <property type="term" value="F:nuclease activity"/>
    <property type="evidence" value="ECO:0007669"/>
    <property type="project" value="UniProtKB-KW"/>
</dbReference>
<dbReference type="GO" id="GO:0000967">
    <property type="term" value="P:rRNA 5'-end processing"/>
    <property type="evidence" value="ECO:0007669"/>
    <property type="project" value="UniProtKB-UniRule"/>
</dbReference>
<dbReference type="CDD" id="cd16964">
    <property type="entry name" value="YqgF"/>
    <property type="match status" value="1"/>
</dbReference>
<dbReference type="Gene3D" id="3.30.420.140">
    <property type="entry name" value="YqgF/RNase H-like domain"/>
    <property type="match status" value="1"/>
</dbReference>
<dbReference type="HAMAP" id="MF_00651">
    <property type="entry name" value="Nuclease_YqgF"/>
    <property type="match status" value="1"/>
</dbReference>
<dbReference type="InterPro" id="IPR012337">
    <property type="entry name" value="RNaseH-like_sf"/>
</dbReference>
<dbReference type="InterPro" id="IPR005227">
    <property type="entry name" value="YqgF"/>
</dbReference>
<dbReference type="InterPro" id="IPR006641">
    <property type="entry name" value="YqgF/RNaseH-like_dom"/>
</dbReference>
<dbReference type="InterPro" id="IPR037027">
    <property type="entry name" value="YqgF/RNaseH-like_dom_sf"/>
</dbReference>
<dbReference type="NCBIfam" id="TIGR00250">
    <property type="entry name" value="RNAse_H_YqgF"/>
    <property type="match status" value="1"/>
</dbReference>
<dbReference type="PANTHER" id="PTHR33317">
    <property type="entry name" value="POLYNUCLEOTIDYL TRANSFERASE, RIBONUCLEASE H-LIKE SUPERFAMILY PROTEIN"/>
    <property type="match status" value="1"/>
</dbReference>
<dbReference type="PANTHER" id="PTHR33317:SF4">
    <property type="entry name" value="POLYNUCLEOTIDYL TRANSFERASE, RIBONUCLEASE H-LIKE SUPERFAMILY PROTEIN"/>
    <property type="match status" value="1"/>
</dbReference>
<dbReference type="Pfam" id="PF03652">
    <property type="entry name" value="RuvX"/>
    <property type="match status" value="1"/>
</dbReference>
<dbReference type="SMART" id="SM00732">
    <property type="entry name" value="YqgFc"/>
    <property type="match status" value="1"/>
</dbReference>
<dbReference type="SUPFAM" id="SSF53098">
    <property type="entry name" value="Ribonuclease H-like"/>
    <property type="match status" value="1"/>
</dbReference>
<comment type="function">
    <text evidence="1">Could be a nuclease involved in processing of the 5'-end of pre-16S rRNA.</text>
</comment>
<comment type="subcellular location">
    <subcellularLocation>
        <location evidence="1">Cytoplasm</location>
    </subcellularLocation>
</comment>
<comment type="similarity">
    <text evidence="1">Belongs to the YqgF nuclease family.</text>
</comment>
<reference key="1">
    <citation type="journal article" date="2007" name="J. Bacteriol.">
        <title>Genome sequence and analysis of the soil cellulolytic actinomycete Thermobifida fusca YX.</title>
        <authorList>
            <person name="Lykidis A."/>
            <person name="Mavromatis K."/>
            <person name="Ivanova N."/>
            <person name="Anderson I."/>
            <person name="Land M."/>
            <person name="DiBartolo G."/>
            <person name="Martinez M."/>
            <person name="Lapidus A."/>
            <person name="Lucas S."/>
            <person name="Copeland A."/>
            <person name="Richardson P."/>
            <person name="Wilson D.B."/>
            <person name="Kyrpides N."/>
        </authorList>
    </citation>
    <scope>NUCLEOTIDE SEQUENCE [LARGE SCALE GENOMIC DNA]</scope>
    <source>
        <strain>YX</strain>
    </source>
</reference>
<evidence type="ECO:0000255" key="1">
    <source>
        <dbReference type="HAMAP-Rule" id="MF_00651"/>
    </source>
</evidence>
<keyword id="KW-0963">Cytoplasm</keyword>
<keyword id="KW-0378">Hydrolase</keyword>
<keyword id="KW-0540">Nuclease</keyword>
<keyword id="KW-0690">Ribosome biogenesis</keyword>
<organism>
    <name type="scientific">Thermobifida fusca (strain YX)</name>
    <dbReference type="NCBI Taxonomy" id="269800"/>
    <lineage>
        <taxon>Bacteria</taxon>
        <taxon>Bacillati</taxon>
        <taxon>Actinomycetota</taxon>
        <taxon>Actinomycetes</taxon>
        <taxon>Streptosporangiales</taxon>
        <taxon>Nocardiopsidaceae</taxon>
        <taxon>Thermobifida</taxon>
    </lineage>
</organism>
<sequence>MRTGVRLAVDPGAARIGVARSDPDGILAIPVETIRRGPGDLDRIAALVLEYEAREVIVGYPASLSGAEGRAARAARAFAKALARRLAPVPVRLVDERLTTVTAELHLRTGASYRKRGARGGRARRSVIDQAAATVLLQNALDTERRTKLPPGELVEGTP</sequence>
<feature type="chain" id="PRO_0000257611" description="Putative pre-16S rRNA nuclease">
    <location>
        <begin position="1"/>
        <end position="159"/>
    </location>
</feature>
<accession>Q47N67</accession>
<proteinExistence type="inferred from homology"/>
<gene>
    <name type="ordered locus">Tfu_2069</name>
</gene>
<name>YQGF_THEFY</name>